<keyword id="KW-0119">Carbohydrate metabolism</keyword>
<keyword id="KW-0299">Galactose metabolism</keyword>
<keyword id="KW-0479">Metal-binding</keyword>
<keyword id="KW-0548">Nucleotidyltransferase</keyword>
<keyword id="KW-1185">Reference proteome</keyword>
<keyword id="KW-0808">Transferase</keyword>
<keyword id="KW-0862">Zinc</keyword>
<evidence type="ECO:0000250" key="1">
    <source>
        <dbReference type="UniProtKB" id="P07902"/>
    </source>
</evidence>
<evidence type="ECO:0000250" key="2">
    <source>
        <dbReference type="UniProtKB" id="P09148"/>
    </source>
</evidence>
<evidence type="ECO:0000255" key="3">
    <source>
        <dbReference type="PROSITE-ProRule" id="PRU10033"/>
    </source>
</evidence>
<evidence type="ECO:0000256" key="4">
    <source>
        <dbReference type="SAM" id="MobiDB-lite"/>
    </source>
</evidence>
<evidence type="ECO:0000305" key="5"/>
<reference key="1">
    <citation type="journal article" date="2000" name="Science">
        <title>The genome sequence of Drosophila melanogaster.</title>
        <authorList>
            <person name="Adams M.D."/>
            <person name="Celniker S.E."/>
            <person name="Holt R.A."/>
            <person name="Evans C.A."/>
            <person name="Gocayne J.D."/>
            <person name="Amanatides P.G."/>
            <person name="Scherer S.E."/>
            <person name="Li P.W."/>
            <person name="Hoskins R.A."/>
            <person name="Galle R.F."/>
            <person name="George R.A."/>
            <person name="Lewis S.E."/>
            <person name="Richards S."/>
            <person name="Ashburner M."/>
            <person name="Henderson S.N."/>
            <person name="Sutton G.G."/>
            <person name="Wortman J.R."/>
            <person name="Yandell M.D."/>
            <person name="Zhang Q."/>
            <person name="Chen L.X."/>
            <person name="Brandon R.C."/>
            <person name="Rogers Y.-H.C."/>
            <person name="Blazej R.G."/>
            <person name="Champe M."/>
            <person name="Pfeiffer B.D."/>
            <person name="Wan K.H."/>
            <person name="Doyle C."/>
            <person name="Baxter E.G."/>
            <person name="Helt G."/>
            <person name="Nelson C.R."/>
            <person name="Miklos G.L.G."/>
            <person name="Abril J.F."/>
            <person name="Agbayani A."/>
            <person name="An H.-J."/>
            <person name="Andrews-Pfannkoch C."/>
            <person name="Baldwin D."/>
            <person name="Ballew R.M."/>
            <person name="Basu A."/>
            <person name="Baxendale J."/>
            <person name="Bayraktaroglu L."/>
            <person name="Beasley E.M."/>
            <person name="Beeson K.Y."/>
            <person name="Benos P.V."/>
            <person name="Berman B.P."/>
            <person name="Bhandari D."/>
            <person name="Bolshakov S."/>
            <person name="Borkova D."/>
            <person name="Botchan M.R."/>
            <person name="Bouck J."/>
            <person name="Brokstein P."/>
            <person name="Brottier P."/>
            <person name="Burtis K.C."/>
            <person name="Busam D.A."/>
            <person name="Butler H."/>
            <person name="Cadieu E."/>
            <person name="Center A."/>
            <person name="Chandra I."/>
            <person name="Cherry J.M."/>
            <person name="Cawley S."/>
            <person name="Dahlke C."/>
            <person name="Davenport L.B."/>
            <person name="Davies P."/>
            <person name="de Pablos B."/>
            <person name="Delcher A."/>
            <person name="Deng Z."/>
            <person name="Mays A.D."/>
            <person name="Dew I."/>
            <person name="Dietz S.M."/>
            <person name="Dodson K."/>
            <person name="Doup L.E."/>
            <person name="Downes M."/>
            <person name="Dugan-Rocha S."/>
            <person name="Dunkov B.C."/>
            <person name="Dunn P."/>
            <person name="Durbin K.J."/>
            <person name="Evangelista C.C."/>
            <person name="Ferraz C."/>
            <person name="Ferriera S."/>
            <person name="Fleischmann W."/>
            <person name="Fosler C."/>
            <person name="Gabrielian A.E."/>
            <person name="Garg N.S."/>
            <person name="Gelbart W.M."/>
            <person name="Glasser K."/>
            <person name="Glodek A."/>
            <person name="Gong F."/>
            <person name="Gorrell J.H."/>
            <person name="Gu Z."/>
            <person name="Guan P."/>
            <person name="Harris M."/>
            <person name="Harris N.L."/>
            <person name="Harvey D.A."/>
            <person name="Heiman T.J."/>
            <person name="Hernandez J.R."/>
            <person name="Houck J."/>
            <person name="Hostin D."/>
            <person name="Houston K.A."/>
            <person name="Howland T.J."/>
            <person name="Wei M.-H."/>
            <person name="Ibegwam C."/>
            <person name="Jalali M."/>
            <person name="Kalush F."/>
            <person name="Karpen G.H."/>
            <person name="Ke Z."/>
            <person name="Kennison J.A."/>
            <person name="Ketchum K.A."/>
            <person name="Kimmel B.E."/>
            <person name="Kodira C.D."/>
            <person name="Kraft C.L."/>
            <person name="Kravitz S."/>
            <person name="Kulp D."/>
            <person name="Lai Z."/>
            <person name="Lasko P."/>
            <person name="Lei Y."/>
            <person name="Levitsky A.A."/>
            <person name="Li J.H."/>
            <person name="Li Z."/>
            <person name="Liang Y."/>
            <person name="Lin X."/>
            <person name="Liu X."/>
            <person name="Mattei B."/>
            <person name="McIntosh T.C."/>
            <person name="McLeod M.P."/>
            <person name="McPherson D."/>
            <person name="Merkulov G."/>
            <person name="Milshina N.V."/>
            <person name="Mobarry C."/>
            <person name="Morris J."/>
            <person name="Moshrefi A."/>
            <person name="Mount S.M."/>
            <person name="Moy M."/>
            <person name="Murphy B."/>
            <person name="Murphy L."/>
            <person name="Muzny D.M."/>
            <person name="Nelson D.L."/>
            <person name="Nelson D.R."/>
            <person name="Nelson K.A."/>
            <person name="Nixon K."/>
            <person name="Nusskern D.R."/>
            <person name="Pacleb J.M."/>
            <person name="Palazzolo M."/>
            <person name="Pittman G.S."/>
            <person name="Pan S."/>
            <person name="Pollard J."/>
            <person name="Puri V."/>
            <person name="Reese M.G."/>
            <person name="Reinert K."/>
            <person name="Remington K."/>
            <person name="Saunders R.D.C."/>
            <person name="Scheeler F."/>
            <person name="Shen H."/>
            <person name="Shue B.C."/>
            <person name="Siden-Kiamos I."/>
            <person name="Simpson M."/>
            <person name="Skupski M.P."/>
            <person name="Smith T.J."/>
            <person name="Spier E."/>
            <person name="Spradling A.C."/>
            <person name="Stapleton M."/>
            <person name="Strong R."/>
            <person name="Sun E."/>
            <person name="Svirskas R."/>
            <person name="Tector C."/>
            <person name="Turner R."/>
            <person name="Venter E."/>
            <person name="Wang A.H."/>
            <person name="Wang X."/>
            <person name="Wang Z.-Y."/>
            <person name="Wassarman D.A."/>
            <person name="Weinstock G.M."/>
            <person name="Weissenbach J."/>
            <person name="Williams S.M."/>
            <person name="Woodage T."/>
            <person name="Worley K.C."/>
            <person name="Wu D."/>
            <person name="Yang S."/>
            <person name="Yao Q.A."/>
            <person name="Ye J."/>
            <person name="Yeh R.-F."/>
            <person name="Zaveri J.S."/>
            <person name="Zhan M."/>
            <person name="Zhang G."/>
            <person name="Zhao Q."/>
            <person name="Zheng L."/>
            <person name="Zheng X.H."/>
            <person name="Zhong F.N."/>
            <person name="Zhong W."/>
            <person name="Zhou X."/>
            <person name="Zhu S.C."/>
            <person name="Zhu X."/>
            <person name="Smith H.O."/>
            <person name="Gibbs R.A."/>
            <person name="Myers E.W."/>
            <person name="Rubin G.M."/>
            <person name="Venter J.C."/>
        </authorList>
    </citation>
    <scope>NUCLEOTIDE SEQUENCE [LARGE SCALE GENOMIC DNA]</scope>
    <source>
        <strain>Berkeley</strain>
    </source>
</reference>
<reference key="2">
    <citation type="journal article" date="2002" name="Genome Biol.">
        <title>Annotation of the Drosophila melanogaster euchromatic genome: a systematic review.</title>
        <authorList>
            <person name="Misra S."/>
            <person name="Crosby M.A."/>
            <person name="Mungall C.J."/>
            <person name="Matthews B.B."/>
            <person name="Campbell K.S."/>
            <person name="Hradecky P."/>
            <person name="Huang Y."/>
            <person name="Kaminker J.S."/>
            <person name="Millburn G.H."/>
            <person name="Prochnik S.E."/>
            <person name="Smith C.D."/>
            <person name="Tupy J.L."/>
            <person name="Whitfield E.J."/>
            <person name="Bayraktaroglu L."/>
            <person name="Berman B.P."/>
            <person name="Bettencourt B.R."/>
            <person name="Celniker S.E."/>
            <person name="de Grey A.D.N.J."/>
            <person name="Drysdale R.A."/>
            <person name="Harris N.L."/>
            <person name="Richter J."/>
            <person name="Russo S."/>
            <person name="Schroeder A.J."/>
            <person name="Shu S.Q."/>
            <person name="Stapleton M."/>
            <person name="Yamada C."/>
            <person name="Ashburner M."/>
            <person name="Gelbart W.M."/>
            <person name="Rubin G.M."/>
            <person name="Lewis S.E."/>
        </authorList>
    </citation>
    <scope>GENOME REANNOTATION</scope>
    <source>
        <strain>Berkeley</strain>
    </source>
</reference>
<reference key="3">
    <citation type="journal article" date="2002" name="Genome Biol.">
        <title>A Drosophila full-length cDNA resource.</title>
        <authorList>
            <person name="Stapleton M."/>
            <person name="Carlson J.W."/>
            <person name="Brokstein P."/>
            <person name="Yu C."/>
            <person name="Champe M."/>
            <person name="George R.A."/>
            <person name="Guarin H."/>
            <person name="Kronmiller B."/>
            <person name="Pacleb J.M."/>
            <person name="Park S."/>
            <person name="Wan K.H."/>
            <person name="Rubin G.M."/>
            <person name="Celniker S.E."/>
        </authorList>
    </citation>
    <scope>NUCLEOTIDE SEQUENCE [LARGE SCALE MRNA]</scope>
    <source>
        <strain>Berkeley</strain>
        <tissue>Head</tissue>
    </source>
</reference>
<reference key="4">
    <citation type="submission" date="2009-01" db="EMBL/GenBank/DDBJ databases">
        <authorList>
            <person name="Carlson J.W."/>
            <person name="Booth B."/>
            <person name="Frise E."/>
            <person name="Park S."/>
            <person name="Wan K.H."/>
            <person name="Yu C."/>
            <person name="Celniker S.E."/>
        </authorList>
    </citation>
    <scope>NUCLEOTIDE SEQUENCE [LARGE SCALE MRNA]</scope>
    <source>
        <strain>Berkeley</strain>
    </source>
</reference>
<feature type="chain" id="PRO_0000169886" description="Probable galactose-1-phosphate uridylyltransferase">
    <location>
        <begin position="1"/>
        <end position="350"/>
    </location>
</feature>
<feature type="region of interest" description="Disordered" evidence="4">
    <location>
        <begin position="31"/>
        <end position="52"/>
    </location>
</feature>
<feature type="active site" description="Tele-UMP-histidine intermediate" evidence="3">
    <location>
        <position position="165"/>
    </location>
</feature>
<feature type="binding site" evidence="3">
    <location>
        <position position="54"/>
    </location>
    <ligand>
        <name>Zn(2+)</name>
        <dbReference type="ChEBI" id="CHEBI:29105"/>
    </ligand>
</feature>
<feature type="binding site" description="in other chain" evidence="1">
    <location>
        <begin position="76"/>
        <end position="77"/>
    </location>
    <ligand>
        <name>UDP-alpha-D-glucose</name>
        <dbReference type="ChEBI" id="CHEBI:58885"/>
        <note>ligand shared between dimeric partners</note>
    </ligand>
</feature>
<feature type="binding site" evidence="1">
    <location>
        <position position="152"/>
    </location>
    <ligand>
        <name>UDP-alpha-D-glucose</name>
        <dbReference type="ChEBI" id="CHEBI:58885"/>
        <note>ligand shared between dimeric partners</note>
    </ligand>
</feature>
<feature type="binding site" evidence="3">
    <location>
        <position position="163"/>
    </location>
    <ligand>
        <name>Zn(2+)</name>
        <dbReference type="ChEBI" id="CHEBI:29105"/>
    </ligand>
</feature>
<feature type="binding site" description="in other chain" evidence="1">
    <location>
        <position position="167"/>
    </location>
    <ligand>
        <name>UDP-alpha-D-glucose</name>
        <dbReference type="ChEBI" id="CHEBI:58885"/>
        <note>ligand shared between dimeric partners</note>
    </ligand>
</feature>
<feature type="binding site" description="in other chain" evidence="1">
    <location>
        <begin position="314"/>
        <end position="317"/>
    </location>
    <ligand>
        <name>UDP-alpha-D-glucose</name>
        <dbReference type="ChEBI" id="CHEBI:58885"/>
        <note>ligand shared between dimeric partners</note>
    </ligand>
</feature>
<feature type="binding site" description="in other chain" evidence="1">
    <location>
        <begin position="319"/>
        <end position="320"/>
    </location>
    <ligand>
        <name>UDP-alpha-D-glucose</name>
        <dbReference type="ChEBI" id="CHEBI:58885"/>
        <note>ligand shared between dimeric partners</note>
    </ligand>
</feature>
<feature type="sequence conflict" description="In Ref. 3; AAL90262." evidence="5" ref="3">
    <original>P</original>
    <variation>T</variation>
    <location>
        <position position="305"/>
    </location>
</feature>
<organism>
    <name type="scientific">Drosophila melanogaster</name>
    <name type="common">Fruit fly</name>
    <dbReference type="NCBI Taxonomy" id="7227"/>
    <lineage>
        <taxon>Eukaryota</taxon>
        <taxon>Metazoa</taxon>
        <taxon>Ecdysozoa</taxon>
        <taxon>Arthropoda</taxon>
        <taxon>Hexapoda</taxon>
        <taxon>Insecta</taxon>
        <taxon>Pterygota</taxon>
        <taxon>Neoptera</taxon>
        <taxon>Endopterygota</taxon>
        <taxon>Diptera</taxon>
        <taxon>Brachycera</taxon>
        <taxon>Muscomorpha</taxon>
        <taxon>Ephydroidea</taxon>
        <taxon>Drosophilidae</taxon>
        <taxon>Drosophila</taxon>
        <taxon>Sophophora</taxon>
    </lineage>
</organism>
<protein>
    <recommendedName>
        <fullName>Probable galactose-1-phosphate uridylyltransferase</fullName>
        <shortName>Gal-1-P uridylyltransferase</shortName>
        <ecNumber evidence="2">2.7.7.12</ecNumber>
    </recommendedName>
    <alternativeName>
        <fullName>UDP-glucose--hexose-1-phosphate uridylyltransferase</fullName>
    </alternativeName>
</protein>
<gene>
    <name type="primary">Galt</name>
    <name type="ORF">CG9232</name>
</gene>
<accession>Q9VMA2</accession>
<accession>B9EQS8</accession>
<accession>Q8SXN7</accession>
<name>GALT_DROME</name>
<proteinExistence type="evidence at transcript level"/>
<dbReference type="EC" id="2.7.7.12" evidence="2"/>
<dbReference type="EMBL" id="AE014134">
    <property type="protein sequence ID" value="AAF52419.2"/>
    <property type="molecule type" value="Genomic_DNA"/>
</dbReference>
<dbReference type="EMBL" id="AY089524">
    <property type="protein sequence ID" value="AAL90262.1"/>
    <property type="molecule type" value="mRNA"/>
</dbReference>
<dbReference type="EMBL" id="BT058003">
    <property type="protein sequence ID" value="ACM16713.1"/>
    <property type="molecule type" value="mRNA"/>
</dbReference>
<dbReference type="RefSeq" id="NP_001260142.1">
    <property type="nucleotide sequence ID" value="NM_001273213.1"/>
</dbReference>
<dbReference type="RefSeq" id="NP_609062.2">
    <property type="nucleotide sequence ID" value="NM_135218.3"/>
</dbReference>
<dbReference type="SMR" id="Q9VMA2"/>
<dbReference type="BioGRID" id="60089">
    <property type="interactions" value="9"/>
</dbReference>
<dbReference type="DIP" id="DIP-18538N"/>
<dbReference type="FunCoup" id="Q9VMA2">
    <property type="interactions" value="430"/>
</dbReference>
<dbReference type="IntAct" id="Q9VMA2">
    <property type="interactions" value="2"/>
</dbReference>
<dbReference type="STRING" id="7227.FBpp0078951"/>
<dbReference type="PaxDb" id="7227-FBpp0078951"/>
<dbReference type="DNASU" id="33935"/>
<dbReference type="EnsemblMetazoa" id="FBtr0079322">
    <property type="protein sequence ID" value="FBpp0078951"/>
    <property type="gene ID" value="FBgn0263200"/>
</dbReference>
<dbReference type="EnsemblMetazoa" id="FBtr0333352">
    <property type="protein sequence ID" value="FBpp0305544"/>
    <property type="gene ID" value="FBgn0263200"/>
</dbReference>
<dbReference type="GeneID" id="33935"/>
<dbReference type="KEGG" id="dme:Dmel_CG9232"/>
<dbReference type="UCSC" id="CG9232-RA">
    <property type="organism name" value="d. melanogaster"/>
</dbReference>
<dbReference type="AGR" id="FB:FBgn0263200"/>
<dbReference type="CTD" id="2592"/>
<dbReference type="FlyBase" id="FBgn0263200">
    <property type="gene designation" value="Galt"/>
</dbReference>
<dbReference type="VEuPathDB" id="VectorBase:FBgn0263200"/>
<dbReference type="eggNOG" id="KOG2958">
    <property type="taxonomic scope" value="Eukaryota"/>
</dbReference>
<dbReference type="GeneTree" id="ENSGT00390000016188"/>
<dbReference type="HOGENOM" id="CLU_029960_0_0_1"/>
<dbReference type="InParanoid" id="Q9VMA2"/>
<dbReference type="OMA" id="CFENRGA"/>
<dbReference type="OrthoDB" id="418412at2759"/>
<dbReference type="PhylomeDB" id="Q9VMA2"/>
<dbReference type="Reactome" id="R-DME-70370">
    <property type="pathway name" value="Galactose catabolism"/>
</dbReference>
<dbReference type="UniPathway" id="UPA00214"/>
<dbReference type="BioGRID-ORCS" id="33935">
    <property type="hits" value="0 hits in 1 CRISPR screen"/>
</dbReference>
<dbReference type="GenomeRNAi" id="33935"/>
<dbReference type="PRO" id="PR:Q9VMA2"/>
<dbReference type="Proteomes" id="UP000000803">
    <property type="component" value="Chromosome 2L"/>
</dbReference>
<dbReference type="Bgee" id="FBgn0263200">
    <property type="expression patterns" value="Expressed in distal medullary amacrine neuron Dm11 in insect head and 117 other cell types or tissues"/>
</dbReference>
<dbReference type="ExpressionAtlas" id="Q9VMA2">
    <property type="expression patterns" value="baseline and differential"/>
</dbReference>
<dbReference type="GO" id="GO:0005737">
    <property type="term" value="C:cytoplasm"/>
    <property type="evidence" value="ECO:0000318"/>
    <property type="project" value="GO_Central"/>
</dbReference>
<dbReference type="GO" id="GO:0005829">
    <property type="term" value="C:cytosol"/>
    <property type="evidence" value="ECO:0000250"/>
    <property type="project" value="FlyBase"/>
</dbReference>
<dbReference type="GO" id="GO:0008108">
    <property type="term" value="F:UDP-glucose:hexose-1-phosphate uridylyltransferase activity"/>
    <property type="evidence" value="ECO:0000315"/>
    <property type="project" value="FlyBase"/>
</dbReference>
<dbReference type="GO" id="GO:0008270">
    <property type="term" value="F:zinc ion binding"/>
    <property type="evidence" value="ECO:0007669"/>
    <property type="project" value="InterPro"/>
</dbReference>
<dbReference type="GO" id="GO:0033499">
    <property type="term" value="P:galactose catabolic process via UDP-galactose, Leloir pathway"/>
    <property type="evidence" value="ECO:0000315"/>
    <property type="project" value="FlyBase"/>
</dbReference>
<dbReference type="GO" id="GO:0006012">
    <property type="term" value="P:galactose metabolic process"/>
    <property type="evidence" value="ECO:0000315"/>
    <property type="project" value="FlyBase"/>
</dbReference>
<dbReference type="GO" id="GO:0006011">
    <property type="term" value="P:UDP-alpha-D-glucose metabolic process"/>
    <property type="evidence" value="ECO:0000315"/>
    <property type="project" value="FlyBase"/>
</dbReference>
<dbReference type="GO" id="GO:0052573">
    <property type="term" value="P:UDP-D-galactose metabolic process"/>
    <property type="evidence" value="ECO:0000315"/>
    <property type="project" value="FlyBase"/>
</dbReference>
<dbReference type="GO" id="GO:0052574">
    <property type="term" value="P:UDP-galactose biosynthetic process"/>
    <property type="evidence" value="ECO:0000315"/>
    <property type="project" value="FlyBase"/>
</dbReference>
<dbReference type="CDD" id="cd00608">
    <property type="entry name" value="GalT"/>
    <property type="match status" value="1"/>
</dbReference>
<dbReference type="FunFam" id="3.30.428.10:FF:000001">
    <property type="entry name" value="Galactose-1-phosphate uridylyltransferase"/>
    <property type="match status" value="1"/>
</dbReference>
<dbReference type="FunFam" id="3.30.428.10:FF:000002">
    <property type="entry name" value="Galactose-1-phosphate uridylyltransferase"/>
    <property type="match status" value="1"/>
</dbReference>
<dbReference type="Gene3D" id="3.30.428.10">
    <property type="entry name" value="HIT-like"/>
    <property type="match status" value="2"/>
</dbReference>
<dbReference type="InterPro" id="IPR001937">
    <property type="entry name" value="GalP_UDPtransf1"/>
</dbReference>
<dbReference type="InterPro" id="IPR019779">
    <property type="entry name" value="GalP_UDPtransf1_His-AS"/>
</dbReference>
<dbReference type="InterPro" id="IPR005850">
    <property type="entry name" value="GalP_Utransf_C"/>
</dbReference>
<dbReference type="InterPro" id="IPR005849">
    <property type="entry name" value="GalP_Utransf_N"/>
</dbReference>
<dbReference type="InterPro" id="IPR036265">
    <property type="entry name" value="HIT-like_sf"/>
</dbReference>
<dbReference type="NCBIfam" id="TIGR00209">
    <property type="entry name" value="galT_1"/>
    <property type="match status" value="1"/>
</dbReference>
<dbReference type="NCBIfam" id="NF008724">
    <property type="entry name" value="PRK11720.1"/>
    <property type="match status" value="1"/>
</dbReference>
<dbReference type="PANTHER" id="PTHR11943">
    <property type="entry name" value="GALACTOSE-1-PHOSPHATE URIDYLYLTRANSFERASE"/>
    <property type="match status" value="1"/>
</dbReference>
<dbReference type="PANTHER" id="PTHR11943:SF1">
    <property type="entry name" value="GALACTOSE-1-PHOSPHATE URIDYLYLTRANSFERASE"/>
    <property type="match status" value="1"/>
</dbReference>
<dbReference type="Pfam" id="PF02744">
    <property type="entry name" value="GalP_UDP_tr_C"/>
    <property type="match status" value="1"/>
</dbReference>
<dbReference type="Pfam" id="PF01087">
    <property type="entry name" value="GalP_UDP_transf"/>
    <property type="match status" value="1"/>
</dbReference>
<dbReference type="PIRSF" id="PIRSF000808">
    <property type="entry name" value="GalT"/>
    <property type="match status" value="1"/>
</dbReference>
<dbReference type="SUPFAM" id="SSF54197">
    <property type="entry name" value="HIT-like"/>
    <property type="match status" value="2"/>
</dbReference>
<dbReference type="PROSITE" id="PS00117">
    <property type="entry name" value="GAL_P_UDP_TRANSF_I"/>
    <property type="match status" value="1"/>
</dbReference>
<sequence length="350" mass="40447">MQFVASEHPHRRLNPLNGQWVLVCPHRTQRPWSGQQEKAQKNELPEFDPTNPLCPGVTRPNGIQTPEYESTYVFENDFPALVEVVPVPPNNDDPLFQIAPARGNCRVMCFHPKSNLTLPTMSAAEIVVVIDEWISQFNELSAKYAWVQIFENKGAAMGCSNPHPHCQIWSCSFLPTEPQLKQERLRAYYATNERPMLADYVERELQRQERIVIENRDWLVVVPFWATWPFETMLISRNNNKRINDLTAEQRYNLALTIKELTTKYDNLFQCSFPYSMGWHGAPTGPEHAHASSAHWTLHAIYYPPLLRSASVRKFMVGFELLAMAQRDLTPEQAAQRLREVDGKCHYLEK</sequence>
<comment type="catalytic activity">
    <reaction evidence="2">
        <text>alpha-D-galactose 1-phosphate + UDP-alpha-D-glucose = alpha-D-glucose 1-phosphate + UDP-alpha-D-galactose</text>
        <dbReference type="Rhea" id="RHEA:13989"/>
        <dbReference type="ChEBI" id="CHEBI:58336"/>
        <dbReference type="ChEBI" id="CHEBI:58601"/>
        <dbReference type="ChEBI" id="CHEBI:58885"/>
        <dbReference type="ChEBI" id="CHEBI:66914"/>
        <dbReference type="EC" id="2.7.7.12"/>
    </reaction>
</comment>
<comment type="cofactor">
    <cofactor evidence="2">
        <name>Zn(2+)</name>
        <dbReference type="ChEBI" id="CHEBI:29105"/>
    </cofactor>
    <text evidence="2">Binds 1 zinc ion per subunit.</text>
</comment>
<comment type="pathway">
    <text>Carbohydrate metabolism; galactose metabolism.</text>
</comment>
<comment type="subunit">
    <text evidence="1">Homodimer.</text>
</comment>
<comment type="similarity">
    <text evidence="5">Belongs to the galactose-1-phosphate uridylyltransferase type 1 family.</text>
</comment>